<dbReference type="EC" id="1.7.1.13" evidence="1"/>
<dbReference type="EMBL" id="CP000029">
    <property type="protein sequence ID" value="AAW53774.1"/>
    <property type="molecule type" value="Genomic_DNA"/>
</dbReference>
<dbReference type="RefSeq" id="WP_001832596.1">
    <property type="nucleotide sequence ID" value="NC_002976.3"/>
</dbReference>
<dbReference type="SMR" id="Q5HR02"/>
<dbReference type="STRING" id="176279.SERP0394"/>
<dbReference type="GeneID" id="50019343"/>
<dbReference type="KEGG" id="ser:SERP0394"/>
<dbReference type="eggNOG" id="COG0780">
    <property type="taxonomic scope" value="Bacteria"/>
</dbReference>
<dbReference type="HOGENOM" id="CLU_102489_0_1_9"/>
<dbReference type="UniPathway" id="UPA00392"/>
<dbReference type="Proteomes" id="UP000000531">
    <property type="component" value="Chromosome"/>
</dbReference>
<dbReference type="GO" id="GO:0005737">
    <property type="term" value="C:cytoplasm"/>
    <property type="evidence" value="ECO:0007669"/>
    <property type="project" value="UniProtKB-SubCell"/>
</dbReference>
<dbReference type="GO" id="GO:0033739">
    <property type="term" value="F:preQ1 synthase activity"/>
    <property type="evidence" value="ECO:0007669"/>
    <property type="project" value="UniProtKB-UniRule"/>
</dbReference>
<dbReference type="GO" id="GO:0008616">
    <property type="term" value="P:queuosine biosynthetic process"/>
    <property type="evidence" value="ECO:0007669"/>
    <property type="project" value="UniProtKB-UniRule"/>
</dbReference>
<dbReference type="GO" id="GO:0006400">
    <property type="term" value="P:tRNA modification"/>
    <property type="evidence" value="ECO:0007669"/>
    <property type="project" value="UniProtKB-UniRule"/>
</dbReference>
<dbReference type="Gene3D" id="3.30.1130.10">
    <property type="match status" value="1"/>
</dbReference>
<dbReference type="HAMAP" id="MF_00818">
    <property type="entry name" value="QueF_type1"/>
    <property type="match status" value="1"/>
</dbReference>
<dbReference type="InterPro" id="IPR043133">
    <property type="entry name" value="GTP-CH-I_C/QueF"/>
</dbReference>
<dbReference type="InterPro" id="IPR050084">
    <property type="entry name" value="NADPH_dep_7-cyano-7-deazaG_red"/>
</dbReference>
<dbReference type="InterPro" id="IPR029500">
    <property type="entry name" value="QueF"/>
</dbReference>
<dbReference type="InterPro" id="IPR016856">
    <property type="entry name" value="QueF_type1"/>
</dbReference>
<dbReference type="NCBIfam" id="TIGR03139">
    <property type="entry name" value="QueF-II"/>
    <property type="match status" value="1"/>
</dbReference>
<dbReference type="PANTHER" id="PTHR34354">
    <property type="entry name" value="NADPH-DEPENDENT 7-CYANO-7-DEAZAGUANINE REDUCTASE"/>
    <property type="match status" value="1"/>
</dbReference>
<dbReference type="PANTHER" id="PTHR34354:SF1">
    <property type="entry name" value="NADPH-DEPENDENT 7-CYANO-7-DEAZAGUANINE REDUCTASE"/>
    <property type="match status" value="1"/>
</dbReference>
<dbReference type="Pfam" id="PF14489">
    <property type="entry name" value="QueF"/>
    <property type="match status" value="1"/>
</dbReference>
<dbReference type="PIRSF" id="PIRSF027377">
    <property type="entry name" value="Nitrile_oxidored_QueF"/>
    <property type="match status" value="1"/>
</dbReference>
<dbReference type="SUPFAM" id="SSF55620">
    <property type="entry name" value="Tetrahydrobiopterin biosynthesis enzymes-like"/>
    <property type="match status" value="1"/>
</dbReference>
<protein>
    <recommendedName>
        <fullName evidence="1">NADPH-dependent 7-cyano-7-deazaguanine reductase</fullName>
        <ecNumber evidence="1">1.7.1.13</ecNumber>
    </recommendedName>
    <alternativeName>
        <fullName evidence="1">7-cyano-7-carbaguanine reductase</fullName>
    </alternativeName>
    <alternativeName>
        <fullName evidence="1">NADPH-dependent nitrile oxidoreductase</fullName>
    </alternativeName>
    <alternativeName>
        <fullName evidence="1">PreQ(0) reductase</fullName>
    </alternativeName>
</protein>
<sequence>MTQGRQKDELKDITLLGNQNNTYEFDYRPEVLETFDNKHQGRDYFVKFNCPEFTSLCPITGQPDFATIYISYIPNIKMVESKSLKLYLFSFRNHGDFHEDCMNIIMNDLINLMDPHYIEVWGKFTPRGGISIDPYTNYGRPDTKYEKMAEHRLMNHDMYPEKIDNR</sequence>
<reference key="1">
    <citation type="journal article" date="2005" name="J. Bacteriol.">
        <title>Insights on evolution of virulence and resistance from the complete genome analysis of an early methicillin-resistant Staphylococcus aureus strain and a biofilm-producing methicillin-resistant Staphylococcus epidermidis strain.</title>
        <authorList>
            <person name="Gill S.R."/>
            <person name="Fouts D.E."/>
            <person name="Archer G.L."/>
            <person name="Mongodin E.F."/>
            <person name="DeBoy R.T."/>
            <person name="Ravel J."/>
            <person name="Paulsen I.T."/>
            <person name="Kolonay J.F."/>
            <person name="Brinkac L.M."/>
            <person name="Beanan M.J."/>
            <person name="Dodson R.J."/>
            <person name="Daugherty S.C."/>
            <person name="Madupu R."/>
            <person name="Angiuoli S.V."/>
            <person name="Durkin A.S."/>
            <person name="Haft D.H."/>
            <person name="Vamathevan J.J."/>
            <person name="Khouri H."/>
            <person name="Utterback T.R."/>
            <person name="Lee C."/>
            <person name="Dimitrov G."/>
            <person name="Jiang L."/>
            <person name="Qin H."/>
            <person name="Weidman J."/>
            <person name="Tran K."/>
            <person name="Kang K.H."/>
            <person name="Hance I.R."/>
            <person name="Nelson K.E."/>
            <person name="Fraser C.M."/>
        </authorList>
    </citation>
    <scope>NUCLEOTIDE SEQUENCE [LARGE SCALE GENOMIC DNA]</scope>
    <source>
        <strain>ATCC 35984 / DSM 28319 / BCRC 17069 / CCUG 31568 / BM 3577 / RP62A</strain>
    </source>
</reference>
<organism>
    <name type="scientific">Staphylococcus epidermidis (strain ATCC 35984 / DSM 28319 / BCRC 17069 / CCUG 31568 / BM 3577 / RP62A)</name>
    <dbReference type="NCBI Taxonomy" id="176279"/>
    <lineage>
        <taxon>Bacteria</taxon>
        <taxon>Bacillati</taxon>
        <taxon>Bacillota</taxon>
        <taxon>Bacilli</taxon>
        <taxon>Bacillales</taxon>
        <taxon>Staphylococcaceae</taxon>
        <taxon>Staphylococcus</taxon>
    </lineage>
</organism>
<evidence type="ECO:0000255" key="1">
    <source>
        <dbReference type="HAMAP-Rule" id="MF_00818"/>
    </source>
</evidence>
<accession>Q5HR02</accession>
<gene>
    <name evidence="1" type="primary">queF</name>
    <name type="ordered locus">SERP0394</name>
</gene>
<proteinExistence type="inferred from homology"/>
<feature type="chain" id="PRO_0000163001" description="NADPH-dependent 7-cyano-7-deazaguanine reductase">
    <location>
        <begin position="1"/>
        <end position="166"/>
    </location>
</feature>
<feature type="active site" description="Thioimide intermediate" evidence="1">
    <location>
        <position position="57"/>
    </location>
</feature>
<feature type="active site" description="Proton donor" evidence="1">
    <location>
        <position position="64"/>
    </location>
</feature>
<feature type="binding site" evidence="1">
    <location>
        <begin position="79"/>
        <end position="81"/>
    </location>
    <ligand>
        <name>substrate</name>
    </ligand>
</feature>
<feature type="binding site" evidence="1">
    <location>
        <begin position="98"/>
        <end position="99"/>
    </location>
    <ligand>
        <name>substrate</name>
    </ligand>
</feature>
<comment type="function">
    <text evidence="1">Catalyzes the NADPH-dependent reduction of 7-cyano-7-deazaguanine (preQ0) to 7-aminomethyl-7-deazaguanine (preQ1).</text>
</comment>
<comment type="catalytic activity">
    <reaction evidence="1">
        <text>7-aminomethyl-7-carbaguanine + 2 NADP(+) = 7-cyano-7-deazaguanine + 2 NADPH + 3 H(+)</text>
        <dbReference type="Rhea" id="RHEA:13409"/>
        <dbReference type="ChEBI" id="CHEBI:15378"/>
        <dbReference type="ChEBI" id="CHEBI:45075"/>
        <dbReference type="ChEBI" id="CHEBI:57783"/>
        <dbReference type="ChEBI" id="CHEBI:58349"/>
        <dbReference type="ChEBI" id="CHEBI:58703"/>
        <dbReference type="EC" id="1.7.1.13"/>
    </reaction>
</comment>
<comment type="pathway">
    <text evidence="1">tRNA modification; tRNA-queuosine biosynthesis.</text>
</comment>
<comment type="subcellular location">
    <subcellularLocation>
        <location evidence="1">Cytoplasm</location>
    </subcellularLocation>
</comment>
<comment type="similarity">
    <text evidence="1">Belongs to the GTP cyclohydrolase I family. QueF type 1 subfamily.</text>
</comment>
<name>QUEF_STAEQ</name>
<keyword id="KW-0963">Cytoplasm</keyword>
<keyword id="KW-0521">NADP</keyword>
<keyword id="KW-0560">Oxidoreductase</keyword>
<keyword id="KW-0671">Queuosine biosynthesis</keyword>
<keyword id="KW-1185">Reference proteome</keyword>